<dbReference type="EMBL" id="CP001001">
    <property type="protein sequence ID" value="ACB24215.1"/>
    <property type="molecule type" value="Genomic_DNA"/>
</dbReference>
<dbReference type="RefSeq" id="WP_012319188.1">
    <property type="nucleotide sequence ID" value="NC_010505.1"/>
</dbReference>
<dbReference type="SMR" id="B1LWS8"/>
<dbReference type="STRING" id="426355.Mrad2831_2220"/>
<dbReference type="KEGG" id="mrd:Mrad2831_2220"/>
<dbReference type="eggNOG" id="COG0089">
    <property type="taxonomic scope" value="Bacteria"/>
</dbReference>
<dbReference type="HOGENOM" id="CLU_037562_3_1_5"/>
<dbReference type="OrthoDB" id="9793353at2"/>
<dbReference type="Proteomes" id="UP000006589">
    <property type="component" value="Chromosome"/>
</dbReference>
<dbReference type="GO" id="GO:1990904">
    <property type="term" value="C:ribonucleoprotein complex"/>
    <property type="evidence" value="ECO:0007669"/>
    <property type="project" value="UniProtKB-KW"/>
</dbReference>
<dbReference type="GO" id="GO:0005840">
    <property type="term" value="C:ribosome"/>
    <property type="evidence" value="ECO:0007669"/>
    <property type="project" value="UniProtKB-KW"/>
</dbReference>
<dbReference type="GO" id="GO:0019843">
    <property type="term" value="F:rRNA binding"/>
    <property type="evidence" value="ECO:0007669"/>
    <property type="project" value="UniProtKB-UniRule"/>
</dbReference>
<dbReference type="GO" id="GO:0003735">
    <property type="term" value="F:structural constituent of ribosome"/>
    <property type="evidence" value="ECO:0007669"/>
    <property type="project" value="InterPro"/>
</dbReference>
<dbReference type="GO" id="GO:0006412">
    <property type="term" value="P:translation"/>
    <property type="evidence" value="ECO:0007669"/>
    <property type="project" value="UniProtKB-UniRule"/>
</dbReference>
<dbReference type="FunFam" id="3.30.70.330:FF:000001">
    <property type="entry name" value="50S ribosomal protein L23"/>
    <property type="match status" value="1"/>
</dbReference>
<dbReference type="Gene3D" id="3.30.70.330">
    <property type="match status" value="1"/>
</dbReference>
<dbReference type="HAMAP" id="MF_01369_B">
    <property type="entry name" value="Ribosomal_uL23_B"/>
    <property type="match status" value="1"/>
</dbReference>
<dbReference type="InterPro" id="IPR012677">
    <property type="entry name" value="Nucleotide-bd_a/b_plait_sf"/>
</dbReference>
<dbReference type="InterPro" id="IPR013025">
    <property type="entry name" value="Ribosomal_uL23-like"/>
</dbReference>
<dbReference type="InterPro" id="IPR012678">
    <property type="entry name" value="Ribosomal_uL23/eL15/eS24_sf"/>
</dbReference>
<dbReference type="InterPro" id="IPR001014">
    <property type="entry name" value="Ribosomal_uL23_CS"/>
</dbReference>
<dbReference type="NCBIfam" id="NF004359">
    <property type="entry name" value="PRK05738.1-3"/>
    <property type="match status" value="1"/>
</dbReference>
<dbReference type="NCBIfam" id="NF004360">
    <property type="entry name" value="PRK05738.1-5"/>
    <property type="match status" value="1"/>
</dbReference>
<dbReference type="NCBIfam" id="NF004363">
    <property type="entry name" value="PRK05738.2-4"/>
    <property type="match status" value="1"/>
</dbReference>
<dbReference type="NCBIfam" id="NF004366">
    <property type="entry name" value="PRK05738.3-2"/>
    <property type="match status" value="1"/>
</dbReference>
<dbReference type="PANTHER" id="PTHR11620">
    <property type="entry name" value="60S RIBOSOMAL PROTEIN L23A"/>
    <property type="match status" value="1"/>
</dbReference>
<dbReference type="Pfam" id="PF00276">
    <property type="entry name" value="Ribosomal_L23"/>
    <property type="match status" value="1"/>
</dbReference>
<dbReference type="SUPFAM" id="SSF54189">
    <property type="entry name" value="Ribosomal proteins S24e, L23 and L15e"/>
    <property type="match status" value="1"/>
</dbReference>
<dbReference type="PROSITE" id="PS00050">
    <property type="entry name" value="RIBOSOMAL_L23"/>
    <property type="match status" value="1"/>
</dbReference>
<sequence length="98" mass="10785">MSADPRHYDIVVSPVITEKATNLTEQNKVVFRVAPKATKPQIKEAVEKLFDVKVTAVNTLVTKGKKKIFRGLRGQRSDVKKAIVTLAEGHTIDVTTGL</sequence>
<feature type="chain" id="PRO_1000144590" description="Large ribosomal subunit protein uL23">
    <location>
        <begin position="1"/>
        <end position="98"/>
    </location>
</feature>
<evidence type="ECO:0000255" key="1">
    <source>
        <dbReference type="HAMAP-Rule" id="MF_01369"/>
    </source>
</evidence>
<evidence type="ECO:0000305" key="2"/>
<name>RL23_METRJ</name>
<organism>
    <name type="scientific">Methylobacterium radiotolerans (strain ATCC 27329 / DSM 1819 / JCM 2831 / NBRC 15690 / NCIMB 10815 / 0-1)</name>
    <dbReference type="NCBI Taxonomy" id="426355"/>
    <lineage>
        <taxon>Bacteria</taxon>
        <taxon>Pseudomonadati</taxon>
        <taxon>Pseudomonadota</taxon>
        <taxon>Alphaproteobacteria</taxon>
        <taxon>Hyphomicrobiales</taxon>
        <taxon>Methylobacteriaceae</taxon>
        <taxon>Methylobacterium</taxon>
    </lineage>
</organism>
<comment type="function">
    <text evidence="1">One of the early assembly proteins it binds 23S rRNA. One of the proteins that surrounds the polypeptide exit tunnel on the outside of the ribosome. Forms the main docking site for trigger factor binding to the ribosome.</text>
</comment>
<comment type="subunit">
    <text evidence="1">Part of the 50S ribosomal subunit. Contacts protein L29, and trigger factor when it is bound to the ribosome.</text>
</comment>
<comment type="similarity">
    <text evidence="1">Belongs to the universal ribosomal protein uL23 family.</text>
</comment>
<gene>
    <name evidence="1" type="primary">rplW</name>
    <name type="ordered locus">Mrad2831_2220</name>
</gene>
<accession>B1LWS8</accession>
<keyword id="KW-0687">Ribonucleoprotein</keyword>
<keyword id="KW-0689">Ribosomal protein</keyword>
<keyword id="KW-0694">RNA-binding</keyword>
<keyword id="KW-0699">rRNA-binding</keyword>
<reference key="1">
    <citation type="submission" date="2008-03" db="EMBL/GenBank/DDBJ databases">
        <title>Complete sequence of chromosome of Methylobacterium radiotolerans JCM 2831.</title>
        <authorList>
            <consortium name="US DOE Joint Genome Institute"/>
            <person name="Copeland A."/>
            <person name="Lucas S."/>
            <person name="Lapidus A."/>
            <person name="Glavina del Rio T."/>
            <person name="Dalin E."/>
            <person name="Tice H."/>
            <person name="Bruce D."/>
            <person name="Goodwin L."/>
            <person name="Pitluck S."/>
            <person name="Kiss H."/>
            <person name="Brettin T."/>
            <person name="Detter J.C."/>
            <person name="Han C."/>
            <person name="Kuske C.R."/>
            <person name="Schmutz J."/>
            <person name="Larimer F."/>
            <person name="Land M."/>
            <person name="Hauser L."/>
            <person name="Kyrpides N."/>
            <person name="Mikhailova N."/>
            <person name="Marx C.J."/>
            <person name="Richardson P."/>
        </authorList>
    </citation>
    <scope>NUCLEOTIDE SEQUENCE [LARGE SCALE GENOMIC DNA]</scope>
    <source>
        <strain>ATCC 27329 / DSM 1819 / JCM 2831 / NBRC 15690 / NCIMB 10815 / 0-1</strain>
    </source>
</reference>
<proteinExistence type="inferred from homology"/>
<protein>
    <recommendedName>
        <fullName evidence="1">Large ribosomal subunit protein uL23</fullName>
    </recommendedName>
    <alternativeName>
        <fullName evidence="2">50S ribosomal protein L23</fullName>
    </alternativeName>
</protein>